<name>HEM1_META3</name>
<proteinExistence type="inferred from homology"/>
<protein>
    <recommendedName>
        <fullName evidence="1">Glutamyl-tRNA reductase</fullName>
        <shortName evidence="1">GluTR</shortName>
        <ecNumber evidence="1">1.2.1.70</ecNumber>
    </recommendedName>
</protein>
<gene>
    <name evidence="1" type="primary">hemA</name>
    <name type="ordered locus">Maeo_0052</name>
</gene>
<sequence length="383" mass="43752">MLLFRADYNNYAVSELQKLRFDEDEFYKKYDNCVLVQTCNRIEIYFDKNAKIIDINEFAEFEMIKSNNAIKHLLRTASGLNSMIVGEDQIIGQIKNSHRKAKELKKTTKYLDTIFLKAIHTGQKVRNNTKINKGCVSIGSAAVQLAEKTVGLNNKNILVVGAGEIATLVAKALIEKNIRAIVVSNRTYERAELLAKKLNGMAVHFDKLGEAINYNDIIICATGAPHAIIDKDRLKNIKGYKVLIDIANPRDVSDDVMELPNIKLYTIDDLKMVSEENLKKRKDEIPRVEKIIEEELSVLTKQLRKLKFENTIKNYDLYIENLRKREMNKALNMIENGKDPTVVLEKFSKVFANKLISDFVNIVNDDTIGDIERVVNKLNKNKI</sequence>
<keyword id="KW-0521">NADP</keyword>
<keyword id="KW-0560">Oxidoreductase</keyword>
<keyword id="KW-0627">Porphyrin biosynthesis</keyword>
<feature type="chain" id="PRO_1000004635" description="Glutamyl-tRNA reductase">
    <location>
        <begin position="1"/>
        <end position="383"/>
    </location>
</feature>
<feature type="active site" description="Nucleophile" evidence="1">
    <location>
        <position position="39"/>
    </location>
</feature>
<feature type="binding site" evidence="1">
    <location>
        <begin position="38"/>
        <end position="41"/>
    </location>
    <ligand>
        <name>substrate</name>
    </ligand>
</feature>
<feature type="binding site" evidence="1">
    <location>
        <position position="82"/>
    </location>
    <ligand>
        <name>substrate</name>
    </ligand>
</feature>
<feature type="binding site" evidence="1">
    <location>
        <begin position="87"/>
        <end position="89"/>
    </location>
    <ligand>
        <name>substrate</name>
    </ligand>
</feature>
<feature type="binding site" evidence="1">
    <location>
        <position position="93"/>
    </location>
    <ligand>
        <name>substrate</name>
    </ligand>
</feature>
<feature type="binding site" evidence="1">
    <location>
        <begin position="161"/>
        <end position="166"/>
    </location>
    <ligand>
        <name>NADP(+)</name>
        <dbReference type="ChEBI" id="CHEBI:58349"/>
    </ligand>
</feature>
<feature type="site" description="Important for activity" evidence="1">
    <location>
        <position position="72"/>
    </location>
</feature>
<comment type="function">
    <text evidence="1">Catalyzes the NADPH-dependent reduction of glutamyl-tRNA(Glu) to glutamate 1-semialdehyde (GSA).</text>
</comment>
<comment type="catalytic activity">
    <reaction evidence="1">
        <text>(S)-4-amino-5-oxopentanoate + tRNA(Glu) + NADP(+) = L-glutamyl-tRNA(Glu) + NADPH + H(+)</text>
        <dbReference type="Rhea" id="RHEA:12344"/>
        <dbReference type="Rhea" id="RHEA-COMP:9663"/>
        <dbReference type="Rhea" id="RHEA-COMP:9680"/>
        <dbReference type="ChEBI" id="CHEBI:15378"/>
        <dbReference type="ChEBI" id="CHEBI:57501"/>
        <dbReference type="ChEBI" id="CHEBI:57783"/>
        <dbReference type="ChEBI" id="CHEBI:58349"/>
        <dbReference type="ChEBI" id="CHEBI:78442"/>
        <dbReference type="ChEBI" id="CHEBI:78520"/>
        <dbReference type="EC" id="1.2.1.70"/>
    </reaction>
</comment>
<comment type="pathway">
    <text evidence="1">Porphyrin-containing compound metabolism; protoporphyrin-IX biosynthesis; 5-aminolevulinate from L-glutamyl-tRNA(Glu): step 1/2.</text>
</comment>
<comment type="subunit">
    <text evidence="1">Homodimer.</text>
</comment>
<comment type="domain">
    <text evidence="1">Possesses an unusual extended V-shaped dimeric structure with each monomer consisting of three distinct domains arranged along a curved 'spinal' alpha-helix. The N-terminal catalytic domain specifically recognizes the glutamate moiety of the substrate. The second domain is the NADPH-binding domain, and the third C-terminal domain is responsible for dimerization.</text>
</comment>
<comment type="miscellaneous">
    <text evidence="1">During catalysis, the active site Cys acts as a nucleophile attacking the alpha-carbonyl group of tRNA-bound glutamate with the formation of a thioester intermediate between enzyme and glutamate, and the concomitant release of tRNA(Glu). The thioester intermediate is finally reduced by direct hydride transfer from NADPH, to form the product GSA.</text>
</comment>
<comment type="similarity">
    <text evidence="1">Belongs to the glutamyl-tRNA reductase family.</text>
</comment>
<reference key="1">
    <citation type="submission" date="2007-06" db="EMBL/GenBank/DDBJ databases">
        <title>Complete sequence of Methanococcus aeolicus Nankai-3.</title>
        <authorList>
            <consortium name="US DOE Joint Genome Institute"/>
            <person name="Copeland A."/>
            <person name="Lucas S."/>
            <person name="Lapidus A."/>
            <person name="Barry K."/>
            <person name="Glavina del Rio T."/>
            <person name="Dalin E."/>
            <person name="Tice H."/>
            <person name="Pitluck S."/>
            <person name="Chain P."/>
            <person name="Malfatti S."/>
            <person name="Shin M."/>
            <person name="Vergez L."/>
            <person name="Schmutz J."/>
            <person name="Larimer F."/>
            <person name="Land M."/>
            <person name="Hauser L."/>
            <person name="Kyrpides N."/>
            <person name="Lykidis A."/>
            <person name="Sieprawska-Lupa M."/>
            <person name="Whitman W.B."/>
            <person name="Richardson P."/>
        </authorList>
    </citation>
    <scope>NUCLEOTIDE SEQUENCE [LARGE SCALE GENOMIC DNA]</scope>
    <source>
        <strain>ATCC BAA-1280 / DSM 17508 / OCM 812 / Nankai-3</strain>
    </source>
</reference>
<organism>
    <name type="scientific">Methanococcus aeolicus (strain ATCC BAA-1280 / DSM 17508 / OCM 812 / Nankai-3)</name>
    <dbReference type="NCBI Taxonomy" id="419665"/>
    <lineage>
        <taxon>Archaea</taxon>
        <taxon>Methanobacteriati</taxon>
        <taxon>Methanobacteriota</taxon>
        <taxon>Methanomada group</taxon>
        <taxon>Methanococci</taxon>
        <taxon>Methanococcales</taxon>
        <taxon>Methanococcaceae</taxon>
        <taxon>Methanococcus</taxon>
    </lineage>
</organism>
<dbReference type="EC" id="1.2.1.70" evidence="1"/>
<dbReference type="EMBL" id="CP000743">
    <property type="protein sequence ID" value="ABR55644.1"/>
    <property type="molecule type" value="Genomic_DNA"/>
</dbReference>
<dbReference type="RefSeq" id="WP_011972776.1">
    <property type="nucleotide sequence ID" value="NC_009635.1"/>
</dbReference>
<dbReference type="SMR" id="A6UT22"/>
<dbReference type="STRING" id="419665.Maeo_0052"/>
<dbReference type="GeneID" id="5326829"/>
<dbReference type="GeneID" id="75305063"/>
<dbReference type="KEGG" id="mae:Maeo_0052"/>
<dbReference type="eggNOG" id="arCOG01036">
    <property type="taxonomic scope" value="Archaea"/>
</dbReference>
<dbReference type="HOGENOM" id="CLU_035113_0_0_2"/>
<dbReference type="OrthoDB" id="4562at2157"/>
<dbReference type="UniPathway" id="UPA00251">
    <property type="reaction ID" value="UER00316"/>
</dbReference>
<dbReference type="Proteomes" id="UP000001106">
    <property type="component" value="Chromosome"/>
</dbReference>
<dbReference type="GO" id="GO:0008883">
    <property type="term" value="F:glutamyl-tRNA reductase activity"/>
    <property type="evidence" value="ECO:0007669"/>
    <property type="project" value="UniProtKB-UniRule"/>
</dbReference>
<dbReference type="GO" id="GO:0050661">
    <property type="term" value="F:NADP binding"/>
    <property type="evidence" value="ECO:0007669"/>
    <property type="project" value="InterPro"/>
</dbReference>
<dbReference type="GO" id="GO:0019353">
    <property type="term" value="P:protoporphyrinogen IX biosynthetic process from glutamate"/>
    <property type="evidence" value="ECO:0007669"/>
    <property type="project" value="TreeGrafter"/>
</dbReference>
<dbReference type="CDD" id="cd05213">
    <property type="entry name" value="NAD_bind_Glutamyl_tRNA_reduct"/>
    <property type="match status" value="1"/>
</dbReference>
<dbReference type="FunFam" id="3.40.50.720:FF:000031">
    <property type="entry name" value="Glutamyl-tRNA reductase"/>
    <property type="match status" value="1"/>
</dbReference>
<dbReference type="Gene3D" id="3.30.460.30">
    <property type="entry name" value="Glutamyl-tRNA reductase, N-terminal domain"/>
    <property type="match status" value="1"/>
</dbReference>
<dbReference type="Gene3D" id="3.40.50.720">
    <property type="entry name" value="NAD(P)-binding Rossmann-like Domain"/>
    <property type="match status" value="1"/>
</dbReference>
<dbReference type="HAMAP" id="MF_00087">
    <property type="entry name" value="Glu_tRNA_reductase"/>
    <property type="match status" value="1"/>
</dbReference>
<dbReference type="InterPro" id="IPR000343">
    <property type="entry name" value="4pyrrol_synth_GluRdtase"/>
</dbReference>
<dbReference type="InterPro" id="IPR015896">
    <property type="entry name" value="4pyrrol_synth_GluRdtase_dimer"/>
</dbReference>
<dbReference type="InterPro" id="IPR015895">
    <property type="entry name" value="4pyrrol_synth_GluRdtase_N"/>
</dbReference>
<dbReference type="InterPro" id="IPR036453">
    <property type="entry name" value="GluRdtase_dimer_dom_sf"/>
</dbReference>
<dbReference type="InterPro" id="IPR036343">
    <property type="entry name" value="GluRdtase_N_sf"/>
</dbReference>
<dbReference type="InterPro" id="IPR036291">
    <property type="entry name" value="NAD(P)-bd_dom_sf"/>
</dbReference>
<dbReference type="InterPro" id="IPR006151">
    <property type="entry name" value="Shikm_DH/Glu-tRNA_Rdtase"/>
</dbReference>
<dbReference type="NCBIfam" id="TIGR01035">
    <property type="entry name" value="hemA"/>
    <property type="match status" value="1"/>
</dbReference>
<dbReference type="PANTHER" id="PTHR43013">
    <property type="entry name" value="GLUTAMYL-TRNA REDUCTASE"/>
    <property type="match status" value="1"/>
</dbReference>
<dbReference type="PANTHER" id="PTHR43013:SF1">
    <property type="entry name" value="GLUTAMYL-TRNA REDUCTASE"/>
    <property type="match status" value="1"/>
</dbReference>
<dbReference type="Pfam" id="PF00745">
    <property type="entry name" value="GlutR_dimer"/>
    <property type="match status" value="1"/>
</dbReference>
<dbReference type="Pfam" id="PF05201">
    <property type="entry name" value="GlutR_N"/>
    <property type="match status" value="1"/>
</dbReference>
<dbReference type="Pfam" id="PF01488">
    <property type="entry name" value="Shikimate_DH"/>
    <property type="match status" value="1"/>
</dbReference>
<dbReference type="PIRSF" id="PIRSF000445">
    <property type="entry name" value="4pyrrol_synth_GluRdtase"/>
    <property type="match status" value="1"/>
</dbReference>
<dbReference type="SUPFAM" id="SSF69742">
    <property type="entry name" value="Glutamyl tRNA-reductase catalytic, N-terminal domain"/>
    <property type="match status" value="1"/>
</dbReference>
<dbReference type="SUPFAM" id="SSF69075">
    <property type="entry name" value="Glutamyl tRNA-reductase dimerization domain"/>
    <property type="match status" value="1"/>
</dbReference>
<dbReference type="SUPFAM" id="SSF51735">
    <property type="entry name" value="NAD(P)-binding Rossmann-fold domains"/>
    <property type="match status" value="1"/>
</dbReference>
<evidence type="ECO:0000255" key="1">
    <source>
        <dbReference type="HAMAP-Rule" id="MF_00087"/>
    </source>
</evidence>
<accession>A6UT22</accession>